<dbReference type="EC" id="2.7.1.21" evidence="1"/>
<dbReference type="EMBL" id="BX936398">
    <property type="protein sequence ID" value="CAH21340.1"/>
    <property type="molecule type" value="Genomic_DNA"/>
</dbReference>
<dbReference type="RefSeq" id="WP_002210659.1">
    <property type="nucleotide sequence ID" value="NZ_CP009712.1"/>
</dbReference>
<dbReference type="SMR" id="Q66AM8"/>
<dbReference type="KEGG" id="ypo:BZ17_360"/>
<dbReference type="KEGG" id="yps:YPTB2102"/>
<dbReference type="PATRIC" id="fig|273123.14.peg.385"/>
<dbReference type="Proteomes" id="UP000001011">
    <property type="component" value="Chromosome"/>
</dbReference>
<dbReference type="GO" id="GO:0005829">
    <property type="term" value="C:cytosol"/>
    <property type="evidence" value="ECO:0007669"/>
    <property type="project" value="TreeGrafter"/>
</dbReference>
<dbReference type="GO" id="GO:0005524">
    <property type="term" value="F:ATP binding"/>
    <property type="evidence" value="ECO:0007669"/>
    <property type="project" value="UniProtKB-UniRule"/>
</dbReference>
<dbReference type="GO" id="GO:0004797">
    <property type="term" value="F:thymidine kinase activity"/>
    <property type="evidence" value="ECO:0007669"/>
    <property type="project" value="UniProtKB-UniRule"/>
</dbReference>
<dbReference type="GO" id="GO:0008270">
    <property type="term" value="F:zinc ion binding"/>
    <property type="evidence" value="ECO:0007669"/>
    <property type="project" value="UniProtKB-UniRule"/>
</dbReference>
<dbReference type="GO" id="GO:0071897">
    <property type="term" value="P:DNA biosynthetic process"/>
    <property type="evidence" value="ECO:0007669"/>
    <property type="project" value="UniProtKB-KW"/>
</dbReference>
<dbReference type="GO" id="GO:0046104">
    <property type="term" value="P:thymidine metabolic process"/>
    <property type="evidence" value="ECO:0007669"/>
    <property type="project" value="TreeGrafter"/>
</dbReference>
<dbReference type="FunFam" id="3.30.60.20:FF:000017">
    <property type="entry name" value="Thymidine kinase"/>
    <property type="match status" value="1"/>
</dbReference>
<dbReference type="FunFam" id="3.40.50.300:FF:000323">
    <property type="entry name" value="Thymidine kinase"/>
    <property type="match status" value="1"/>
</dbReference>
<dbReference type="Gene3D" id="3.30.60.20">
    <property type="match status" value="1"/>
</dbReference>
<dbReference type="Gene3D" id="3.40.50.300">
    <property type="entry name" value="P-loop containing nucleotide triphosphate hydrolases"/>
    <property type="match status" value="1"/>
</dbReference>
<dbReference type="HAMAP" id="MF_00124">
    <property type="entry name" value="Thymidine_kinase"/>
    <property type="match status" value="1"/>
</dbReference>
<dbReference type="InterPro" id="IPR027417">
    <property type="entry name" value="P-loop_NTPase"/>
</dbReference>
<dbReference type="InterPro" id="IPR001267">
    <property type="entry name" value="Thymidine_kinase"/>
</dbReference>
<dbReference type="InterPro" id="IPR020633">
    <property type="entry name" value="Thymidine_kinase_CS"/>
</dbReference>
<dbReference type="NCBIfam" id="NF003300">
    <property type="entry name" value="PRK04296.1-5"/>
    <property type="match status" value="1"/>
</dbReference>
<dbReference type="PANTHER" id="PTHR11441">
    <property type="entry name" value="THYMIDINE KINASE"/>
    <property type="match status" value="1"/>
</dbReference>
<dbReference type="PANTHER" id="PTHR11441:SF0">
    <property type="entry name" value="THYMIDINE KINASE, CYTOSOLIC"/>
    <property type="match status" value="1"/>
</dbReference>
<dbReference type="Pfam" id="PF00265">
    <property type="entry name" value="TK"/>
    <property type="match status" value="1"/>
</dbReference>
<dbReference type="PIRSF" id="PIRSF035805">
    <property type="entry name" value="TK_cell"/>
    <property type="match status" value="1"/>
</dbReference>
<dbReference type="SUPFAM" id="SSF57716">
    <property type="entry name" value="Glucocorticoid receptor-like (DNA-binding domain)"/>
    <property type="match status" value="1"/>
</dbReference>
<dbReference type="SUPFAM" id="SSF52540">
    <property type="entry name" value="P-loop containing nucleoside triphosphate hydrolases"/>
    <property type="match status" value="1"/>
</dbReference>
<dbReference type="PROSITE" id="PS00603">
    <property type="entry name" value="TK_CELLULAR_TYPE"/>
    <property type="match status" value="1"/>
</dbReference>
<keyword id="KW-0067">ATP-binding</keyword>
<keyword id="KW-0963">Cytoplasm</keyword>
<keyword id="KW-0237">DNA synthesis</keyword>
<keyword id="KW-0418">Kinase</keyword>
<keyword id="KW-0479">Metal-binding</keyword>
<keyword id="KW-0547">Nucleotide-binding</keyword>
<keyword id="KW-0808">Transferase</keyword>
<keyword id="KW-0862">Zinc</keyword>
<comment type="catalytic activity">
    <reaction evidence="1">
        <text>thymidine + ATP = dTMP + ADP + H(+)</text>
        <dbReference type="Rhea" id="RHEA:19129"/>
        <dbReference type="ChEBI" id="CHEBI:15378"/>
        <dbReference type="ChEBI" id="CHEBI:17748"/>
        <dbReference type="ChEBI" id="CHEBI:30616"/>
        <dbReference type="ChEBI" id="CHEBI:63528"/>
        <dbReference type="ChEBI" id="CHEBI:456216"/>
        <dbReference type="EC" id="2.7.1.21"/>
    </reaction>
</comment>
<comment type="subunit">
    <text evidence="1">Homotetramer.</text>
</comment>
<comment type="subcellular location">
    <subcellularLocation>
        <location evidence="1">Cytoplasm</location>
    </subcellularLocation>
</comment>
<comment type="similarity">
    <text evidence="1">Belongs to the thymidine kinase family.</text>
</comment>
<reference key="1">
    <citation type="journal article" date="2004" name="Proc. Natl. Acad. Sci. U.S.A.">
        <title>Insights into the evolution of Yersinia pestis through whole-genome comparison with Yersinia pseudotuberculosis.</title>
        <authorList>
            <person name="Chain P.S.G."/>
            <person name="Carniel E."/>
            <person name="Larimer F.W."/>
            <person name="Lamerdin J."/>
            <person name="Stoutland P.O."/>
            <person name="Regala W.M."/>
            <person name="Georgescu A.M."/>
            <person name="Vergez L.M."/>
            <person name="Land M.L."/>
            <person name="Motin V.L."/>
            <person name="Brubaker R.R."/>
            <person name="Fowler J."/>
            <person name="Hinnebusch J."/>
            <person name="Marceau M."/>
            <person name="Medigue C."/>
            <person name="Simonet M."/>
            <person name="Chenal-Francisque V."/>
            <person name="Souza B."/>
            <person name="Dacheux D."/>
            <person name="Elliott J.M."/>
            <person name="Derbise A."/>
            <person name="Hauser L.J."/>
            <person name="Garcia E."/>
        </authorList>
    </citation>
    <scope>NUCLEOTIDE SEQUENCE [LARGE SCALE GENOMIC DNA]</scope>
    <source>
        <strain>IP32953</strain>
    </source>
</reference>
<evidence type="ECO:0000255" key="1">
    <source>
        <dbReference type="HAMAP-Rule" id="MF_00124"/>
    </source>
</evidence>
<accession>Q66AM8</accession>
<gene>
    <name evidence="1" type="primary">tdk</name>
    <name type="ordered locus">YPTB2102</name>
</gene>
<protein>
    <recommendedName>
        <fullName evidence="1">Thymidine kinase</fullName>
        <ecNumber evidence="1">2.7.1.21</ecNumber>
    </recommendedName>
</protein>
<sequence>MAQLYFYYSAMNAGKSTALLQSSYNYQERGMRTLVFTAEIDNRFGVGTVSSRIGLSSQAQLYNSGTSLLSIIAAEHQDTPIHCILLDECQFLTKEQVQELCQVVDELHLPVLCYGLRTDFLGELFPGSKYLLAWADKLVELKTICHCGRKANMVLRLDEQGRAVHNGEQVVIGGNESYVSVCRRHYKEAIKAACCS</sequence>
<name>KITH_YERPS</name>
<feature type="chain" id="PRO_0000175052" description="Thymidine kinase">
    <location>
        <begin position="1"/>
        <end position="196"/>
    </location>
</feature>
<feature type="active site" description="Proton acceptor" evidence="1">
    <location>
        <position position="88"/>
    </location>
</feature>
<feature type="binding site" evidence="1">
    <location>
        <begin position="9"/>
        <end position="16"/>
    </location>
    <ligand>
        <name>ATP</name>
        <dbReference type="ChEBI" id="CHEBI:30616"/>
    </ligand>
</feature>
<feature type="binding site" evidence="1">
    <location>
        <begin position="87"/>
        <end position="90"/>
    </location>
    <ligand>
        <name>ATP</name>
        <dbReference type="ChEBI" id="CHEBI:30616"/>
    </ligand>
</feature>
<feature type="binding site" evidence="1">
    <location>
        <position position="145"/>
    </location>
    <ligand>
        <name>Zn(2+)</name>
        <dbReference type="ChEBI" id="CHEBI:29105"/>
    </ligand>
</feature>
<feature type="binding site" evidence="1">
    <location>
        <position position="147"/>
    </location>
    <ligand>
        <name>Zn(2+)</name>
        <dbReference type="ChEBI" id="CHEBI:29105"/>
    </ligand>
</feature>
<feature type="binding site" evidence="1">
    <location>
        <position position="182"/>
    </location>
    <ligand>
        <name>Zn(2+)</name>
        <dbReference type="ChEBI" id="CHEBI:29105"/>
    </ligand>
</feature>
<feature type="binding site" evidence="1">
    <location>
        <position position="185"/>
    </location>
    <ligand>
        <name>Zn(2+)</name>
        <dbReference type="ChEBI" id="CHEBI:29105"/>
    </ligand>
</feature>
<organism>
    <name type="scientific">Yersinia pseudotuberculosis serotype I (strain IP32953)</name>
    <dbReference type="NCBI Taxonomy" id="273123"/>
    <lineage>
        <taxon>Bacteria</taxon>
        <taxon>Pseudomonadati</taxon>
        <taxon>Pseudomonadota</taxon>
        <taxon>Gammaproteobacteria</taxon>
        <taxon>Enterobacterales</taxon>
        <taxon>Yersiniaceae</taxon>
        <taxon>Yersinia</taxon>
    </lineage>
</organism>
<proteinExistence type="inferred from homology"/>